<proteinExistence type="evidence at protein level"/>
<evidence type="ECO:0000250" key="1"/>
<evidence type="ECO:0000255" key="2"/>
<evidence type="ECO:0000256" key="3">
    <source>
        <dbReference type="SAM" id="MobiDB-lite"/>
    </source>
</evidence>
<evidence type="ECO:0000269" key="4">
    <source>
    </source>
</evidence>
<evidence type="ECO:0000269" key="5">
    <source>
    </source>
</evidence>
<evidence type="ECO:0000305" key="6"/>
<accession>Q94BP0</accession>
<accession>Q9FIS9</accession>
<keyword id="KW-0217">Developmental protein</keyword>
<keyword id="KW-0221">Differentiation</keyword>
<keyword id="KW-0287">Flowering</keyword>
<keyword id="KW-0539">Nucleus</keyword>
<keyword id="KW-1185">Reference proteome</keyword>
<keyword id="KW-0804">Transcription</keyword>
<keyword id="KW-0805">Transcription regulation</keyword>
<protein>
    <recommendedName>
        <fullName>Probable transcriptional regulator SLK2</fullName>
        <shortName>AtSLK2</shortName>
    </recommendedName>
    <alternativeName>
        <fullName>Protein SEUSS-like 2</fullName>
    </alternativeName>
</protein>
<gene>
    <name type="primary">SLK2</name>
    <name type="ordered locus">At5g62090</name>
    <name type="ORF">MTG10.12</name>
</gene>
<sequence>MASSTSGIFFQGDDESQSFINSHLTSSYGNSSNSAPGCGGPTGGYHNLSMVSGDMHNPVMMSVSTPGPSAGASSLVTDANSGLSGGGPHLQRSASINNESYMRLPASPMSFSSNNISISGSSVVDGSTVVQRHDPSVQLGGSSATSLPTSQTNQIPLSMARRASESFFQDPNNLTQARKKPRLDSKQDDALQQQILRQWLQRQDILQQQQQQQQQGQNPQFQILLQQQKLRQQQQYLQSLPPLQRVQLQQQQQVQQQQQLQQQHQQQQQQLQQQGMQMQLTGGPRPYENSVCARRLMQYLYHQRQRPSESSIVYWRKFVTEYFSPRAKKRWCLSHYDNVGHSALGVSPQAATDEWQCDLCGSKSGRGFEATFDVLPRLNEIKFASGVLDELLYLGVPSERRYGSGIMVLEYGKAVQESVYEHIRVVREGHLRIIFSQELKILSWEFCTRRHEELLPRRLVAPQVNQLLQVAEKCQSTIDQSGSDGIHQQDLQANSNMVMAAGRQLAKSLESHSLNDLGFSKRYVRCLQISEVVSSMKDMIDFCRDQKVGPIEALKSYPYRMKAGKPQMQEMEQLAAARGLPPDRNSLNKLMALRNSGINIPMNNMSGQGSLPGSAQAAAFALTNYQSMLMKQNHLNSDLNNTTIQQEPSRNRSASPSYQGTSPLLPGFVHSPSISGVSSHLSPQRQMPSSSYNGSTQQYHQQPPSCSSGNQTLEQQMIHQIWQQMANSNGGSGQQQQSLSGQNMMNCNTNMGRNRTDYVPAAAETPSTSNRFRGIKGLDQSQNLEGIISNTSLNFGNNGVFSNEVDESMGGYSWKS</sequence>
<organism>
    <name type="scientific">Arabidopsis thaliana</name>
    <name type="common">Mouse-ear cress</name>
    <dbReference type="NCBI Taxonomy" id="3702"/>
    <lineage>
        <taxon>Eukaryota</taxon>
        <taxon>Viridiplantae</taxon>
        <taxon>Streptophyta</taxon>
        <taxon>Embryophyta</taxon>
        <taxon>Tracheophyta</taxon>
        <taxon>Spermatophyta</taxon>
        <taxon>Magnoliopsida</taxon>
        <taxon>eudicotyledons</taxon>
        <taxon>Gunneridae</taxon>
        <taxon>Pentapetalae</taxon>
        <taxon>rosids</taxon>
        <taxon>malvids</taxon>
        <taxon>Brassicales</taxon>
        <taxon>Brassicaceae</taxon>
        <taxon>Camelineae</taxon>
        <taxon>Arabidopsis</taxon>
    </lineage>
</organism>
<feature type="chain" id="PRO_0000430164" description="Probable transcriptional regulator SLK2">
    <location>
        <begin position="1"/>
        <end position="816"/>
    </location>
</feature>
<feature type="region of interest" description="Disordered" evidence="3">
    <location>
        <begin position="133"/>
        <end position="153"/>
    </location>
</feature>
<feature type="region of interest" description="Disordered" evidence="3">
    <location>
        <begin position="166"/>
        <end position="189"/>
    </location>
</feature>
<feature type="region of interest" description="Dimerization" evidence="1">
    <location>
        <begin position="307"/>
        <end position="554"/>
    </location>
</feature>
<feature type="region of interest" description="Disordered" evidence="3">
    <location>
        <begin position="644"/>
        <end position="711"/>
    </location>
</feature>
<feature type="short sequence motif" description="Nuclear localization signal" evidence="2">
    <location>
        <begin position="316"/>
        <end position="330"/>
    </location>
</feature>
<feature type="compositionally biased region" description="Polar residues" evidence="3">
    <location>
        <begin position="139"/>
        <end position="153"/>
    </location>
</feature>
<feature type="compositionally biased region" description="Polar residues" evidence="3">
    <location>
        <begin position="166"/>
        <end position="176"/>
    </location>
</feature>
<feature type="compositionally biased region" description="Polar residues" evidence="3">
    <location>
        <begin position="644"/>
        <end position="662"/>
    </location>
</feature>
<feature type="compositionally biased region" description="Polar residues" evidence="3">
    <location>
        <begin position="672"/>
        <end position="711"/>
    </location>
</feature>
<name>SLK2_ARATH</name>
<dbReference type="EMBL" id="AB016880">
    <property type="protein sequence ID" value="BAB10171.1"/>
    <property type="status" value="ALT_INIT"/>
    <property type="molecule type" value="Genomic_DNA"/>
</dbReference>
<dbReference type="EMBL" id="CP002688">
    <property type="protein sequence ID" value="AED97560.1"/>
    <property type="molecule type" value="Genomic_DNA"/>
</dbReference>
<dbReference type="EMBL" id="CP002688">
    <property type="protein sequence ID" value="AED97561.1"/>
    <property type="molecule type" value="Genomic_DNA"/>
</dbReference>
<dbReference type="EMBL" id="CP002688">
    <property type="protein sequence ID" value="ANM70821.1"/>
    <property type="molecule type" value="Genomic_DNA"/>
</dbReference>
<dbReference type="EMBL" id="AY039981">
    <property type="protein sequence ID" value="AAK64158.1"/>
    <property type="molecule type" value="mRNA"/>
</dbReference>
<dbReference type="EMBL" id="AY150458">
    <property type="protein sequence ID" value="AAN12899.1"/>
    <property type="molecule type" value="mRNA"/>
</dbReference>
<dbReference type="RefSeq" id="NP_001332402.1">
    <property type="nucleotide sequence ID" value="NM_001345520.1"/>
</dbReference>
<dbReference type="RefSeq" id="NP_201015.1">
    <property type="nucleotide sequence ID" value="NM_125602.3"/>
</dbReference>
<dbReference type="RefSeq" id="NP_851245.1">
    <property type="nucleotide sequence ID" value="NM_180914.2"/>
</dbReference>
<dbReference type="BioGRID" id="21573">
    <property type="interactions" value="10"/>
</dbReference>
<dbReference type="FunCoup" id="Q94BP0">
    <property type="interactions" value="928"/>
</dbReference>
<dbReference type="IntAct" id="Q94BP0">
    <property type="interactions" value="7"/>
</dbReference>
<dbReference type="STRING" id="3702.Q94BP0"/>
<dbReference type="GlyGen" id="Q94BP0">
    <property type="glycosylation" value="3 sites, 1 O-linked glycan (2 sites)"/>
</dbReference>
<dbReference type="iPTMnet" id="Q94BP0"/>
<dbReference type="PaxDb" id="3702-AT5G62090.1"/>
<dbReference type="ProteomicsDB" id="232560"/>
<dbReference type="EnsemblPlants" id="AT5G62090.1">
    <property type="protein sequence ID" value="AT5G62090.1"/>
    <property type="gene ID" value="AT5G62090"/>
</dbReference>
<dbReference type="EnsemblPlants" id="AT5G62090.2">
    <property type="protein sequence ID" value="AT5G62090.2"/>
    <property type="gene ID" value="AT5G62090"/>
</dbReference>
<dbReference type="EnsemblPlants" id="AT5G62090.3">
    <property type="protein sequence ID" value="AT5G62090.3"/>
    <property type="gene ID" value="AT5G62090"/>
</dbReference>
<dbReference type="GeneID" id="836329"/>
<dbReference type="Gramene" id="AT5G62090.1">
    <property type="protein sequence ID" value="AT5G62090.1"/>
    <property type="gene ID" value="AT5G62090"/>
</dbReference>
<dbReference type="Gramene" id="AT5G62090.2">
    <property type="protein sequence ID" value="AT5G62090.2"/>
    <property type="gene ID" value="AT5G62090"/>
</dbReference>
<dbReference type="Gramene" id="AT5G62090.3">
    <property type="protein sequence ID" value="AT5G62090.3"/>
    <property type="gene ID" value="AT5G62090"/>
</dbReference>
<dbReference type="KEGG" id="ath:AT5G62090"/>
<dbReference type="Araport" id="AT5G62090"/>
<dbReference type="TAIR" id="AT5G62090">
    <property type="gene designation" value="SLK2"/>
</dbReference>
<dbReference type="eggNOG" id="ENOG502QURB">
    <property type="taxonomic scope" value="Eukaryota"/>
</dbReference>
<dbReference type="HOGENOM" id="CLU_007007_1_0_1"/>
<dbReference type="InParanoid" id="Q94BP0"/>
<dbReference type="OMA" id="PRPYENS"/>
<dbReference type="OrthoDB" id="774557at2759"/>
<dbReference type="PhylomeDB" id="Q94BP0"/>
<dbReference type="PRO" id="PR:Q94BP0"/>
<dbReference type="Proteomes" id="UP000006548">
    <property type="component" value="Chromosome 5"/>
</dbReference>
<dbReference type="ExpressionAtlas" id="Q94BP0">
    <property type="expression patterns" value="baseline and differential"/>
</dbReference>
<dbReference type="GO" id="GO:0005634">
    <property type="term" value="C:nucleus"/>
    <property type="evidence" value="ECO:0007669"/>
    <property type="project" value="UniProtKB-SubCell"/>
</dbReference>
<dbReference type="GO" id="GO:0030154">
    <property type="term" value="P:cell differentiation"/>
    <property type="evidence" value="ECO:0007669"/>
    <property type="project" value="UniProtKB-KW"/>
</dbReference>
<dbReference type="GO" id="GO:0009793">
    <property type="term" value="P:embryo development ending in seed dormancy"/>
    <property type="evidence" value="ECO:0000315"/>
    <property type="project" value="TAIR"/>
</dbReference>
<dbReference type="GO" id="GO:0048467">
    <property type="term" value="P:gynoecium development"/>
    <property type="evidence" value="ECO:0000315"/>
    <property type="project" value="TAIR"/>
</dbReference>
<dbReference type="GO" id="GO:1901001">
    <property type="term" value="P:negative regulation of response to salt stress"/>
    <property type="evidence" value="ECO:0000315"/>
    <property type="project" value="UniProtKB"/>
</dbReference>
<dbReference type="GO" id="GO:0048481">
    <property type="term" value="P:plant ovule development"/>
    <property type="evidence" value="ECO:0000315"/>
    <property type="project" value="TAIR"/>
</dbReference>
<dbReference type="GO" id="GO:0047484">
    <property type="term" value="P:regulation of response to osmotic stress"/>
    <property type="evidence" value="ECO:0000315"/>
    <property type="project" value="UniProtKB"/>
</dbReference>
<dbReference type="GO" id="GO:0010044">
    <property type="term" value="P:response to aluminum ion"/>
    <property type="evidence" value="ECO:0000315"/>
    <property type="project" value="TAIR"/>
</dbReference>
<dbReference type="InterPro" id="IPR029005">
    <property type="entry name" value="LIM-bd/SEUSS"/>
</dbReference>
<dbReference type="PANTHER" id="PTHR10378">
    <property type="entry name" value="LIM DOMAIN-BINDING PROTEIN"/>
    <property type="match status" value="1"/>
</dbReference>
<dbReference type="Pfam" id="PF01803">
    <property type="entry name" value="LIM_bind"/>
    <property type="match status" value="1"/>
</dbReference>
<comment type="function">
    <text evidence="4 5">Probable transcription regulator that functions in the development of the carpel margin meristem similarly to SEUSS (SEU). In association with SEU, supports organ development from meristematic regions by facilitating auxin response and thus organ initiation, and by sustaining meristematic potential through the maintenance of PHABULOSA expression (PubMed:20007451). DNA-binding adapter subunit of the SEU-SLK2 transcriptional corepressor of abiotic stress (e.g. salt and osmotic stress) response genes (PubMed:24564815).</text>
</comment>
<comment type="subunit">
    <text evidence="5">Forms corepressor complexes with LUH; LUH is the transcription repressor subunit and SLK2 the specific DNA-binding adapters.</text>
</comment>
<comment type="subcellular location">
    <subcellularLocation>
        <location evidence="1">Nucleus</location>
    </subcellularLocation>
</comment>
<comment type="tissue specificity">
    <text evidence="4">Expressed in young flower meristems, ovules and the carpel margin meristem.</text>
</comment>
<comment type="disruption phenotype">
    <text evidence="4 5">No visible phenotype under normal growth conditions, but the double mutants seu and slk2 show severe embryonic and seedling defects characterized by a loss of all structures derived from the shoot apical meristem (SAM) (PubMed:20007451). Enhanced tolerance to salt and osmotic stress conditions (PubMed:24564815).</text>
</comment>
<comment type="similarity">
    <text evidence="6">Belongs to the adn1/SEU family.</text>
</comment>
<comment type="sequence caution" evidence="6">
    <conflict type="erroneous initiation">
        <sequence resource="EMBL-CDS" id="BAB10171"/>
    </conflict>
    <text>Truncated N-terminus.</text>
</comment>
<reference key="1">
    <citation type="journal article" date="1998" name="DNA Res.">
        <title>Structural analysis of Arabidopsis thaliana chromosome 5. VII. Sequence features of the regions of 1,013,767 bp covered by sixteen physically assigned P1 and TAC clones.</title>
        <authorList>
            <person name="Nakamura Y."/>
            <person name="Sato S."/>
            <person name="Asamizu E."/>
            <person name="Kaneko T."/>
            <person name="Kotani H."/>
            <person name="Miyajima N."/>
            <person name="Tabata S."/>
        </authorList>
    </citation>
    <scope>NUCLEOTIDE SEQUENCE [LARGE SCALE GENOMIC DNA]</scope>
    <source>
        <strain>cv. Columbia</strain>
    </source>
</reference>
<reference key="2">
    <citation type="journal article" date="2017" name="Plant J.">
        <title>Araport11: a complete reannotation of the Arabidopsis thaliana reference genome.</title>
        <authorList>
            <person name="Cheng C.Y."/>
            <person name="Krishnakumar V."/>
            <person name="Chan A.P."/>
            <person name="Thibaud-Nissen F."/>
            <person name="Schobel S."/>
            <person name="Town C.D."/>
        </authorList>
    </citation>
    <scope>GENOME REANNOTATION</scope>
    <source>
        <strain>cv. Columbia</strain>
    </source>
</reference>
<reference key="3">
    <citation type="journal article" date="2003" name="Science">
        <title>Empirical analysis of transcriptional activity in the Arabidopsis genome.</title>
        <authorList>
            <person name="Yamada K."/>
            <person name="Lim J."/>
            <person name="Dale J.M."/>
            <person name="Chen H."/>
            <person name="Shinn P."/>
            <person name="Palm C.J."/>
            <person name="Southwick A.M."/>
            <person name="Wu H.C."/>
            <person name="Kim C.J."/>
            <person name="Nguyen M."/>
            <person name="Pham P.K."/>
            <person name="Cheuk R.F."/>
            <person name="Karlin-Newmann G."/>
            <person name="Liu S.X."/>
            <person name="Lam B."/>
            <person name="Sakano H."/>
            <person name="Wu T."/>
            <person name="Yu G."/>
            <person name="Miranda M."/>
            <person name="Quach H.L."/>
            <person name="Tripp M."/>
            <person name="Chang C.H."/>
            <person name="Lee J.M."/>
            <person name="Toriumi M.J."/>
            <person name="Chan M.M."/>
            <person name="Tang C.C."/>
            <person name="Onodera C.S."/>
            <person name="Deng J.M."/>
            <person name="Akiyama K."/>
            <person name="Ansari Y."/>
            <person name="Arakawa T."/>
            <person name="Banh J."/>
            <person name="Banno F."/>
            <person name="Bowser L."/>
            <person name="Brooks S.Y."/>
            <person name="Carninci P."/>
            <person name="Chao Q."/>
            <person name="Choy N."/>
            <person name="Enju A."/>
            <person name="Goldsmith A.D."/>
            <person name="Gurjal M."/>
            <person name="Hansen N.F."/>
            <person name="Hayashizaki Y."/>
            <person name="Johnson-Hopson C."/>
            <person name="Hsuan V.W."/>
            <person name="Iida K."/>
            <person name="Karnes M."/>
            <person name="Khan S."/>
            <person name="Koesema E."/>
            <person name="Ishida J."/>
            <person name="Jiang P.X."/>
            <person name="Jones T."/>
            <person name="Kawai J."/>
            <person name="Kamiya A."/>
            <person name="Meyers C."/>
            <person name="Nakajima M."/>
            <person name="Narusaka M."/>
            <person name="Seki M."/>
            <person name="Sakurai T."/>
            <person name="Satou M."/>
            <person name="Tamse R."/>
            <person name="Vaysberg M."/>
            <person name="Wallender E.K."/>
            <person name="Wong C."/>
            <person name="Yamamura Y."/>
            <person name="Yuan S."/>
            <person name="Shinozaki K."/>
            <person name="Davis R.W."/>
            <person name="Theologis A."/>
            <person name="Ecker J.R."/>
        </authorList>
    </citation>
    <scope>NUCLEOTIDE SEQUENCE [LARGE SCALE MRNA]</scope>
    <source>
        <strain>cv. Columbia</strain>
    </source>
</reference>
<reference key="4">
    <citation type="journal article" date="2010" name="Plant Physiol.">
        <title>SEUSS and SEUSS-LIKE transcriptional adaptors regulate floral and embryonic development in Arabidopsis.</title>
        <authorList>
            <person name="Bao F."/>
            <person name="Azhakanandam S."/>
            <person name="Franks R.G."/>
        </authorList>
    </citation>
    <scope>FUNCTION</scope>
    <scope>TISSUE SPECIFICITY</scope>
    <scope>DISRUPTION PHENOTYPE</scope>
</reference>
<reference key="5">
    <citation type="journal article" date="2014" name="BMC Plant Biol.">
        <title>Involvement of co-repressor LUH and the adapter proteins SLK1 and SLK2 in the regulation of abiotic stress response genes in Arabidopsis.</title>
        <authorList>
            <person name="Shrestha B."/>
            <person name="Guragain B."/>
            <person name="Sridhar V.V."/>
        </authorList>
    </citation>
    <scope>FUNCTION IN ABIOTIC STRESSES</scope>
    <scope>DISRUPTION PHENOTYPE</scope>
    <scope>INTERACTION WITH LUH</scope>
</reference>